<comment type="function">
    <text evidence="1">One of the primary rRNA binding proteins, it binds directly to 16S rRNA where it helps nucleate assembly of the platform of the 30S subunit by binding and bridging several RNA helices of the 16S rRNA.</text>
</comment>
<comment type="function">
    <text evidence="1">Forms an intersubunit bridge (bridge B4) with the 23S rRNA of the 50S subunit in the ribosome.</text>
</comment>
<comment type="subunit">
    <text evidence="1">Part of the 30S ribosomal subunit. Forms a bridge to the 50S subunit in the 70S ribosome, contacting the 23S rRNA.</text>
</comment>
<comment type="similarity">
    <text evidence="1">Belongs to the universal ribosomal protein uS15 family.</text>
</comment>
<reference key="1">
    <citation type="journal article" date="2008" name="DNA Res.">
        <title>The whole-genome sequencing of the obligate intracellular bacterium Orientia tsutsugamushi revealed massive gene amplification during reductive genome evolution.</title>
        <authorList>
            <person name="Nakayama K."/>
            <person name="Yamashita A."/>
            <person name="Kurokawa K."/>
            <person name="Morimoto T."/>
            <person name="Ogawa M."/>
            <person name="Fukuhara M."/>
            <person name="Urakami H."/>
            <person name="Ohnishi M."/>
            <person name="Uchiyama I."/>
            <person name="Ogura Y."/>
            <person name="Ooka T."/>
            <person name="Oshima K."/>
            <person name="Tamura A."/>
            <person name="Hattori M."/>
            <person name="Hayashi T."/>
        </authorList>
    </citation>
    <scope>NUCLEOTIDE SEQUENCE [LARGE SCALE GENOMIC DNA]</scope>
    <source>
        <strain>Ikeda</strain>
    </source>
</reference>
<sequence length="89" mass="10422">MSITVERKKALISEYADLEKNTGSVEVQCAILTERIINLTQHCKINFKDFHSKRGLLMLVSSRRKLLSYLKKKDLNRYTQLINRLGLRK</sequence>
<protein>
    <recommendedName>
        <fullName evidence="1">Small ribosomal subunit protein uS15</fullName>
    </recommendedName>
    <alternativeName>
        <fullName evidence="2">30S ribosomal protein S15</fullName>
    </alternativeName>
</protein>
<dbReference type="EMBL" id="AP008981">
    <property type="protein sequence ID" value="BAG40819.1"/>
    <property type="molecule type" value="Genomic_DNA"/>
</dbReference>
<dbReference type="RefSeq" id="WP_012461867.1">
    <property type="nucleotide sequence ID" value="NC_010793.1"/>
</dbReference>
<dbReference type="SMR" id="B3CTX2"/>
<dbReference type="KEGG" id="ott:OTT_1361"/>
<dbReference type="HOGENOM" id="CLU_148518_0_0_5"/>
<dbReference type="OrthoDB" id="9799262at2"/>
<dbReference type="Proteomes" id="UP000001033">
    <property type="component" value="Chromosome"/>
</dbReference>
<dbReference type="GO" id="GO:0022627">
    <property type="term" value="C:cytosolic small ribosomal subunit"/>
    <property type="evidence" value="ECO:0007669"/>
    <property type="project" value="TreeGrafter"/>
</dbReference>
<dbReference type="GO" id="GO:0019843">
    <property type="term" value="F:rRNA binding"/>
    <property type="evidence" value="ECO:0007669"/>
    <property type="project" value="UniProtKB-UniRule"/>
</dbReference>
<dbReference type="GO" id="GO:0003735">
    <property type="term" value="F:structural constituent of ribosome"/>
    <property type="evidence" value="ECO:0007669"/>
    <property type="project" value="InterPro"/>
</dbReference>
<dbReference type="GO" id="GO:0006412">
    <property type="term" value="P:translation"/>
    <property type="evidence" value="ECO:0007669"/>
    <property type="project" value="UniProtKB-UniRule"/>
</dbReference>
<dbReference type="CDD" id="cd00677">
    <property type="entry name" value="S15_NS1_EPRS_RNA-bind"/>
    <property type="match status" value="1"/>
</dbReference>
<dbReference type="FunFam" id="1.10.287.10:FF:000002">
    <property type="entry name" value="30S ribosomal protein S15"/>
    <property type="match status" value="1"/>
</dbReference>
<dbReference type="Gene3D" id="6.10.250.3130">
    <property type="match status" value="1"/>
</dbReference>
<dbReference type="Gene3D" id="1.10.287.10">
    <property type="entry name" value="S15/NS1, RNA-binding"/>
    <property type="match status" value="1"/>
</dbReference>
<dbReference type="HAMAP" id="MF_01343_B">
    <property type="entry name" value="Ribosomal_uS15_B"/>
    <property type="match status" value="1"/>
</dbReference>
<dbReference type="InterPro" id="IPR000589">
    <property type="entry name" value="Ribosomal_uS15"/>
</dbReference>
<dbReference type="InterPro" id="IPR005290">
    <property type="entry name" value="Ribosomal_uS15_bac-type"/>
</dbReference>
<dbReference type="InterPro" id="IPR009068">
    <property type="entry name" value="uS15_NS1_RNA-bd_sf"/>
</dbReference>
<dbReference type="NCBIfam" id="TIGR00952">
    <property type="entry name" value="S15_bact"/>
    <property type="match status" value="1"/>
</dbReference>
<dbReference type="PANTHER" id="PTHR23321">
    <property type="entry name" value="RIBOSOMAL PROTEIN S15, BACTERIAL AND ORGANELLAR"/>
    <property type="match status" value="1"/>
</dbReference>
<dbReference type="PANTHER" id="PTHR23321:SF26">
    <property type="entry name" value="SMALL RIBOSOMAL SUBUNIT PROTEIN US15M"/>
    <property type="match status" value="1"/>
</dbReference>
<dbReference type="Pfam" id="PF00312">
    <property type="entry name" value="Ribosomal_S15"/>
    <property type="match status" value="1"/>
</dbReference>
<dbReference type="SMART" id="SM01387">
    <property type="entry name" value="Ribosomal_S15"/>
    <property type="match status" value="1"/>
</dbReference>
<dbReference type="SUPFAM" id="SSF47060">
    <property type="entry name" value="S15/NS1 RNA-binding domain"/>
    <property type="match status" value="1"/>
</dbReference>
<organism>
    <name type="scientific">Orientia tsutsugamushi (strain Ikeda)</name>
    <name type="common">Rickettsia tsutsugamushi</name>
    <dbReference type="NCBI Taxonomy" id="334380"/>
    <lineage>
        <taxon>Bacteria</taxon>
        <taxon>Pseudomonadati</taxon>
        <taxon>Pseudomonadota</taxon>
        <taxon>Alphaproteobacteria</taxon>
        <taxon>Rickettsiales</taxon>
        <taxon>Rickettsiaceae</taxon>
        <taxon>Rickettsieae</taxon>
        <taxon>Orientia</taxon>
    </lineage>
</organism>
<evidence type="ECO:0000255" key="1">
    <source>
        <dbReference type="HAMAP-Rule" id="MF_01343"/>
    </source>
</evidence>
<evidence type="ECO:0000305" key="2"/>
<keyword id="KW-0687">Ribonucleoprotein</keyword>
<keyword id="KW-0689">Ribosomal protein</keyword>
<keyword id="KW-0694">RNA-binding</keyword>
<keyword id="KW-0699">rRNA-binding</keyword>
<proteinExistence type="inferred from homology"/>
<accession>B3CTX2</accession>
<feature type="chain" id="PRO_1000143147" description="Small ribosomal subunit protein uS15">
    <location>
        <begin position="1"/>
        <end position="89"/>
    </location>
</feature>
<name>RS15_ORITI</name>
<gene>
    <name evidence="1" type="primary">rpsO</name>
    <name type="ordered locus">OTT_1361</name>
</gene>